<gene>
    <name type="ordered locus">Mpal_2734</name>
</gene>
<reference key="1">
    <citation type="journal article" date="2015" name="Genome Announc.">
        <title>Complete Genome Sequence of Methanosphaerula palustris E1-9CT, a Hydrogenotrophic Methanogen Isolated from a Minerotrophic Fen Peatland.</title>
        <authorList>
            <person name="Cadillo-Quiroz H."/>
            <person name="Browne P."/>
            <person name="Kyrpides N."/>
            <person name="Woyke T."/>
            <person name="Goodwin L."/>
            <person name="Detter C."/>
            <person name="Yavitt J.B."/>
            <person name="Zinder S.H."/>
        </authorList>
    </citation>
    <scope>NUCLEOTIDE SEQUENCE [LARGE SCALE GENOMIC DNA]</scope>
    <source>
        <strain>ATCC BAA-1556 / DSM 19958 / E1-9c</strain>
    </source>
</reference>
<evidence type="ECO:0000255" key="1">
    <source>
        <dbReference type="HAMAP-Rule" id="MF_02109"/>
    </source>
</evidence>
<feature type="chain" id="PRO_0000392654" description="Cysteate synthase">
    <location>
        <begin position="1"/>
        <end position="425"/>
    </location>
</feature>
<feature type="binding site" evidence="1">
    <location>
        <position position="132"/>
    </location>
    <ligand>
        <name>pyridoxal 5'-phosphate</name>
        <dbReference type="ChEBI" id="CHEBI:597326"/>
    </ligand>
</feature>
<feature type="binding site" evidence="1">
    <location>
        <position position="382"/>
    </location>
    <ligand>
        <name>pyridoxal 5'-phosphate</name>
        <dbReference type="ChEBI" id="CHEBI:597326"/>
    </ligand>
</feature>
<feature type="modified residue" description="N6-(pyridoxal phosphate)lysine" evidence="1">
    <location>
        <position position="106"/>
    </location>
</feature>
<protein>
    <recommendedName>
        <fullName evidence="1">Cysteate synthase</fullName>
        <shortName evidence="1">CS</shortName>
        <shortName evidence="1">Cya synthase</shortName>
        <ecNumber evidence="1">2.5.1.76</ecNumber>
    </recommendedName>
</protein>
<keyword id="KW-0174">Coenzyme M biosynthesis</keyword>
<keyword id="KW-0663">Pyridoxal phosphate</keyword>
<keyword id="KW-1185">Reference proteome</keyword>
<keyword id="KW-0808">Transferase</keyword>
<name>CYAS_METPE</name>
<proteinExistence type="inferred from homology"/>
<sequence length="425" mass="45009">MSGDYQLRCPTCGLRITDRYSSFCPAGHPGLLVTDYPERTLSLSGQPGIFRYESWLPVRGRLPFTGGTVTYQSDGLAEELGLAHLFIGFNGYWPERGADLVTCSFKELEAVPSMLRATERTAGILVVASAGNTARAFCQVSALTGIPVVIVVPQSALPRLWTTEPAPAALVIGVDGDYADAIAYSTALAAVDPRLIVEGGARNVARRDGMGTVMLDGAVTIGRIPDHYVQAVGSGTGGVAAYEAASRLIRDGRFGGRLPILHLAQNLPFVPMVAAWEEHTRDLQVGPGTPYTEEAEQWVSAPVLTNRTPPYGVPGGTYDALEATGGEMYAISNGLARAAGTLFTDCEGIDLDPAAAVATASLIQAIEMGTIEPGSRVLLNITGGGYDRVVEDHTLVPTPAGYRVPAGNPDDEIRRDVITWVNDHA</sequence>
<comment type="function">
    <text evidence="1">Specifically catalyzes the beta-elimination of phosphate from L-phosphoserine and the beta-addition of sulfite to the dehydroalanine intermediate to produce L-cysteate.</text>
</comment>
<comment type="catalytic activity">
    <reaction evidence="1">
        <text>O-phospho-L-serine + sulfite + H(+) = L-cysteate + phosphate</text>
        <dbReference type="Rhea" id="RHEA:26486"/>
        <dbReference type="ChEBI" id="CHEBI:15378"/>
        <dbReference type="ChEBI" id="CHEBI:17359"/>
        <dbReference type="ChEBI" id="CHEBI:43474"/>
        <dbReference type="ChEBI" id="CHEBI:57524"/>
        <dbReference type="ChEBI" id="CHEBI:58090"/>
        <dbReference type="EC" id="2.5.1.76"/>
    </reaction>
</comment>
<comment type="cofactor">
    <cofactor evidence="1">
        <name>pyridoxal 5'-phosphate</name>
        <dbReference type="ChEBI" id="CHEBI:597326"/>
    </cofactor>
</comment>
<comment type="pathway">
    <text evidence="1">Cofactor biosynthesis; coenzyme M biosynthesis.</text>
</comment>
<comment type="subunit">
    <text evidence="1">Homotrimer.</text>
</comment>
<comment type="similarity">
    <text evidence="1">Belongs to the threonine synthase family. Cysteate synthase subfamily.</text>
</comment>
<accession>B8GFW4</accession>
<dbReference type="EC" id="2.5.1.76" evidence="1"/>
<dbReference type="EMBL" id="CP001338">
    <property type="protein sequence ID" value="ACL17997.1"/>
    <property type="molecule type" value="Genomic_DNA"/>
</dbReference>
<dbReference type="RefSeq" id="WP_012619316.1">
    <property type="nucleotide sequence ID" value="NC_011832.1"/>
</dbReference>
<dbReference type="SMR" id="B8GFW4"/>
<dbReference type="STRING" id="521011.Mpal_2734"/>
<dbReference type="GeneID" id="7270842"/>
<dbReference type="KEGG" id="mpl:Mpal_2734"/>
<dbReference type="eggNOG" id="arCOG01434">
    <property type="taxonomic scope" value="Archaea"/>
</dbReference>
<dbReference type="HOGENOM" id="CLU_666687_0_0_2"/>
<dbReference type="OrthoDB" id="6371at2157"/>
<dbReference type="UniPathway" id="UPA00355"/>
<dbReference type="Proteomes" id="UP000002457">
    <property type="component" value="Chromosome"/>
</dbReference>
<dbReference type="GO" id="GO:0044686">
    <property type="term" value="F:cysteate synthase activity"/>
    <property type="evidence" value="ECO:0007669"/>
    <property type="project" value="UniProtKB-UniRule"/>
</dbReference>
<dbReference type="GO" id="GO:0030170">
    <property type="term" value="F:pyridoxal phosphate binding"/>
    <property type="evidence" value="ECO:0007669"/>
    <property type="project" value="UniProtKB-UniRule"/>
</dbReference>
<dbReference type="GO" id="GO:0019295">
    <property type="term" value="P:coenzyme M biosynthetic process"/>
    <property type="evidence" value="ECO:0007669"/>
    <property type="project" value="UniProtKB-UniRule"/>
</dbReference>
<dbReference type="Gene3D" id="3.40.50.1100">
    <property type="match status" value="2"/>
</dbReference>
<dbReference type="HAMAP" id="MF_02109">
    <property type="entry name" value="Cya_synthase"/>
    <property type="match status" value="1"/>
</dbReference>
<dbReference type="InterPro" id="IPR022401">
    <property type="entry name" value="Cysteate_synthase"/>
</dbReference>
<dbReference type="InterPro" id="IPR001926">
    <property type="entry name" value="TrpB-like_PALP"/>
</dbReference>
<dbReference type="InterPro" id="IPR036052">
    <property type="entry name" value="TrpB-like_PALP_sf"/>
</dbReference>
<dbReference type="NCBIfam" id="TIGR03844">
    <property type="entry name" value="cysteate_syn"/>
    <property type="match status" value="1"/>
</dbReference>
<dbReference type="Pfam" id="PF00291">
    <property type="entry name" value="PALP"/>
    <property type="match status" value="1"/>
</dbReference>
<dbReference type="SUPFAM" id="SSF53686">
    <property type="entry name" value="Tryptophan synthase beta subunit-like PLP-dependent enzymes"/>
    <property type="match status" value="1"/>
</dbReference>
<organism>
    <name type="scientific">Methanosphaerula palustris (strain ATCC BAA-1556 / DSM 19958 / E1-9c)</name>
    <dbReference type="NCBI Taxonomy" id="521011"/>
    <lineage>
        <taxon>Archaea</taxon>
        <taxon>Methanobacteriati</taxon>
        <taxon>Methanobacteriota</taxon>
        <taxon>Stenosarchaea group</taxon>
        <taxon>Methanomicrobia</taxon>
        <taxon>Methanomicrobiales</taxon>
        <taxon>Methanoregulaceae</taxon>
        <taxon>Methanosphaerula</taxon>
    </lineage>
</organism>